<comment type="function">
    <text evidence="1 3 4 5 7">Required for efficient transcription initiation by RNA polymerase I (Pol I). Required for the formation of the competent pre-initiation complex (PIC).</text>
</comment>
<comment type="subunit">
    <text evidence="4 6">Part of Pol I pre-initiation complex (PIC), in which Pol I core assembles with RRN3 and promoter-bound UTBF and SL1/TIF-IB complex. Interacts with POLR1F, EIF3L, TAF1B and TAF1C.</text>
</comment>
<comment type="interaction">
    <interactant intactId="EBI-2510653">
        <id>Q9NYV6</id>
    </interactant>
    <interactant intactId="EBI-20809393">
        <id>Q8NFM7</id>
        <label>IL17RD</label>
    </interactant>
    <organismsDiffer>false</organismsDiffer>
    <experiments>2</experiments>
</comment>
<comment type="subcellular location">
    <subcellularLocation>
        <location evidence="4">Nucleus</location>
        <location evidence="4">Nucleolus</location>
    </subcellularLocation>
</comment>
<comment type="alternative products">
    <event type="alternative splicing"/>
    <isoform>
        <id>Q9NYV6-1</id>
        <name>1</name>
        <sequence type="displayed"/>
    </isoform>
    <isoform>
        <id>Q9NYV6-2</id>
        <name>2</name>
        <sequence type="described" ref="VSP_056338 VSP_056339"/>
    </isoform>
    <isoform>
        <id>Q9NYV6-3</id>
        <name>3</name>
        <sequence type="described" ref="VSP_056520"/>
    </isoform>
    <isoform>
        <id>Q9NYV6-4</id>
        <name>4</name>
        <sequence type="described" ref="VSP_056519 VSP_056521"/>
    </isoform>
</comment>
<comment type="PTM">
    <text evidence="1 7">Phosphorylation is required for participation in rDNA transcription (By similarity). Phosphorylated at Thr-200 by MAPK9/JNK2, which abrogates initiation complex formation.</text>
</comment>
<comment type="similarity">
    <text evidence="10">Belongs to the RRN3 family.</text>
</comment>
<reference key="1">
    <citation type="journal article" date="2000" name="EMBO Rep.">
        <title>TIF-IA, the factor mediating growth-dependent control of ribosomal RNA synthesis, is the mammalian homolog of yeast Rrn3p.</title>
        <authorList>
            <person name="Bodem J."/>
            <person name="Dobreva G."/>
            <person name="Hoffmann-Rohrer U."/>
            <person name="Iben S."/>
            <person name="Zentgraf H."/>
            <person name="Delius H."/>
            <person name="Vingron M."/>
            <person name="Grummt I."/>
        </authorList>
    </citation>
    <scope>NUCLEOTIDE SEQUENCE [MRNA] (ISOFORM 1)</scope>
    <scope>FUNCTION</scope>
</reference>
<reference key="2">
    <citation type="journal article" date="2000" name="Proc. Natl. Acad. Sci. U.S.A.">
        <title>RNA polymerase I transcription factor Rrn3 is functionally conserved between yeast and human.</title>
        <authorList>
            <person name="Moorefield B."/>
            <person name="Greene E.A."/>
            <person name="Reeder R.H."/>
        </authorList>
    </citation>
    <scope>NUCLEOTIDE SEQUENCE [MRNA] (ISOFORM 1)</scope>
    <scope>FUNCTION</scope>
</reference>
<reference key="3">
    <citation type="journal article" date="2004" name="Nat. Genet.">
        <title>Complete sequencing and characterization of 21,243 full-length human cDNAs.</title>
        <authorList>
            <person name="Ota T."/>
            <person name="Suzuki Y."/>
            <person name="Nishikawa T."/>
            <person name="Otsuki T."/>
            <person name="Sugiyama T."/>
            <person name="Irie R."/>
            <person name="Wakamatsu A."/>
            <person name="Hayashi K."/>
            <person name="Sato H."/>
            <person name="Nagai K."/>
            <person name="Kimura K."/>
            <person name="Makita H."/>
            <person name="Sekine M."/>
            <person name="Obayashi M."/>
            <person name="Nishi T."/>
            <person name="Shibahara T."/>
            <person name="Tanaka T."/>
            <person name="Ishii S."/>
            <person name="Yamamoto J."/>
            <person name="Saito K."/>
            <person name="Kawai Y."/>
            <person name="Isono Y."/>
            <person name="Nakamura Y."/>
            <person name="Nagahari K."/>
            <person name="Murakami K."/>
            <person name="Yasuda T."/>
            <person name="Iwayanagi T."/>
            <person name="Wagatsuma M."/>
            <person name="Shiratori A."/>
            <person name="Sudo H."/>
            <person name="Hosoiri T."/>
            <person name="Kaku Y."/>
            <person name="Kodaira H."/>
            <person name="Kondo H."/>
            <person name="Sugawara M."/>
            <person name="Takahashi M."/>
            <person name="Kanda K."/>
            <person name="Yokoi T."/>
            <person name="Furuya T."/>
            <person name="Kikkawa E."/>
            <person name="Omura Y."/>
            <person name="Abe K."/>
            <person name="Kamihara K."/>
            <person name="Katsuta N."/>
            <person name="Sato K."/>
            <person name="Tanikawa M."/>
            <person name="Yamazaki M."/>
            <person name="Ninomiya K."/>
            <person name="Ishibashi T."/>
            <person name="Yamashita H."/>
            <person name="Murakawa K."/>
            <person name="Fujimori K."/>
            <person name="Tanai H."/>
            <person name="Kimata M."/>
            <person name="Watanabe M."/>
            <person name="Hiraoka S."/>
            <person name="Chiba Y."/>
            <person name="Ishida S."/>
            <person name="Ono Y."/>
            <person name="Takiguchi S."/>
            <person name="Watanabe S."/>
            <person name="Yosida M."/>
            <person name="Hotuta T."/>
            <person name="Kusano J."/>
            <person name="Kanehori K."/>
            <person name="Takahashi-Fujii A."/>
            <person name="Hara H."/>
            <person name="Tanase T.-O."/>
            <person name="Nomura Y."/>
            <person name="Togiya S."/>
            <person name="Komai F."/>
            <person name="Hara R."/>
            <person name="Takeuchi K."/>
            <person name="Arita M."/>
            <person name="Imose N."/>
            <person name="Musashino K."/>
            <person name="Yuuki H."/>
            <person name="Oshima A."/>
            <person name="Sasaki N."/>
            <person name="Aotsuka S."/>
            <person name="Yoshikawa Y."/>
            <person name="Matsunawa H."/>
            <person name="Ichihara T."/>
            <person name="Shiohata N."/>
            <person name="Sano S."/>
            <person name="Moriya S."/>
            <person name="Momiyama H."/>
            <person name="Satoh N."/>
            <person name="Takami S."/>
            <person name="Terashima Y."/>
            <person name="Suzuki O."/>
            <person name="Nakagawa S."/>
            <person name="Senoh A."/>
            <person name="Mizoguchi H."/>
            <person name="Goto Y."/>
            <person name="Shimizu F."/>
            <person name="Wakebe H."/>
            <person name="Hishigaki H."/>
            <person name="Watanabe T."/>
            <person name="Sugiyama A."/>
            <person name="Takemoto M."/>
            <person name="Kawakami B."/>
            <person name="Yamazaki M."/>
            <person name="Watanabe K."/>
            <person name="Kumagai A."/>
            <person name="Itakura S."/>
            <person name="Fukuzumi Y."/>
            <person name="Fujimori Y."/>
            <person name="Komiyama M."/>
            <person name="Tashiro H."/>
            <person name="Tanigami A."/>
            <person name="Fujiwara T."/>
            <person name="Ono T."/>
            <person name="Yamada K."/>
            <person name="Fujii Y."/>
            <person name="Ozaki K."/>
            <person name="Hirao M."/>
            <person name="Ohmori Y."/>
            <person name="Kawabata A."/>
            <person name="Hikiji T."/>
            <person name="Kobatake N."/>
            <person name="Inagaki H."/>
            <person name="Ikema Y."/>
            <person name="Okamoto S."/>
            <person name="Okitani R."/>
            <person name="Kawakami T."/>
            <person name="Noguchi S."/>
            <person name="Itoh T."/>
            <person name="Shigeta K."/>
            <person name="Senba T."/>
            <person name="Matsumura K."/>
            <person name="Nakajima Y."/>
            <person name="Mizuno T."/>
            <person name="Morinaga M."/>
            <person name="Sasaki M."/>
            <person name="Togashi T."/>
            <person name="Oyama M."/>
            <person name="Hata H."/>
            <person name="Watanabe M."/>
            <person name="Komatsu T."/>
            <person name="Mizushima-Sugano J."/>
            <person name="Satoh T."/>
            <person name="Shirai Y."/>
            <person name="Takahashi Y."/>
            <person name="Nakagawa K."/>
            <person name="Okumura K."/>
            <person name="Nagase T."/>
            <person name="Nomura N."/>
            <person name="Kikuchi H."/>
            <person name="Masuho Y."/>
            <person name="Yamashita R."/>
            <person name="Nakai K."/>
            <person name="Yada T."/>
            <person name="Nakamura Y."/>
            <person name="Ohara O."/>
            <person name="Isogai T."/>
            <person name="Sugano S."/>
        </authorList>
    </citation>
    <scope>NUCLEOTIDE SEQUENCE [LARGE SCALE MRNA] (ISOFORMS 1; 3 AND 4)</scope>
    <source>
        <tissue>Hippocampus</tissue>
        <tissue>Thymus</tissue>
        <tissue>Uterus</tissue>
    </source>
</reference>
<reference key="4">
    <citation type="journal article" date="2004" name="Nature">
        <title>The sequence and analysis of duplication-rich human chromosome 16.</title>
        <authorList>
            <person name="Martin J."/>
            <person name="Han C."/>
            <person name="Gordon L.A."/>
            <person name="Terry A."/>
            <person name="Prabhakar S."/>
            <person name="She X."/>
            <person name="Xie G."/>
            <person name="Hellsten U."/>
            <person name="Chan Y.M."/>
            <person name="Altherr M."/>
            <person name="Couronne O."/>
            <person name="Aerts A."/>
            <person name="Bajorek E."/>
            <person name="Black S."/>
            <person name="Blumer H."/>
            <person name="Branscomb E."/>
            <person name="Brown N.C."/>
            <person name="Bruno W.J."/>
            <person name="Buckingham J.M."/>
            <person name="Callen D.F."/>
            <person name="Campbell C.S."/>
            <person name="Campbell M.L."/>
            <person name="Campbell E.W."/>
            <person name="Caoile C."/>
            <person name="Challacombe J.F."/>
            <person name="Chasteen L.A."/>
            <person name="Chertkov O."/>
            <person name="Chi H.C."/>
            <person name="Christensen M."/>
            <person name="Clark L.M."/>
            <person name="Cohn J.D."/>
            <person name="Denys M."/>
            <person name="Detter J.C."/>
            <person name="Dickson M."/>
            <person name="Dimitrijevic-Bussod M."/>
            <person name="Escobar J."/>
            <person name="Fawcett J.J."/>
            <person name="Flowers D."/>
            <person name="Fotopulos D."/>
            <person name="Glavina T."/>
            <person name="Gomez M."/>
            <person name="Gonzales E."/>
            <person name="Goodstein D."/>
            <person name="Goodwin L.A."/>
            <person name="Grady D.L."/>
            <person name="Grigoriev I."/>
            <person name="Groza M."/>
            <person name="Hammon N."/>
            <person name="Hawkins T."/>
            <person name="Haydu L."/>
            <person name="Hildebrand C.E."/>
            <person name="Huang W."/>
            <person name="Israni S."/>
            <person name="Jett J."/>
            <person name="Jewett P.B."/>
            <person name="Kadner K."/>
            <person name="Kimball H."/>
            <person name="Kobayashi A."/>
            <person name="Krawczyk M.-C."/>
            <person name="Leyba T."/>
            <person name="Longmire J.L."/>
            <person name="Lopez F."/>
            <person name="Lou Y."/>
            <person name="Lowry S."/>
            <person name="Ludeman T."/>
            <person name="Manohar C.F."/>
            <person name="Mark G.A."/>
            <person name="McMurray K.L."/>
            <person name="Meincke L.J."/>
            <person name="Morgan J."/>
            <person name="Moyzis R.K."/>
            <person name="Mundt M.O."/>
            <person name="Munk A.C."/>
            <person name="Nandkeshwar R.D."/>
            <person name="Pitluck S."/>
            <person name="Pollard M."/>
            <person name="Predki P."/>
            <person name="Parson-Quintana B."/>
            <person name="Ramirez L."/>
            <person name="Rash S."/>
            <person name="Retterer J."/>
            <person name="Ricke D.O."/>
            <person name="Robinson D.L."/>
            <person name="Rodriguez A."/>
            <person name="Salamov A."/>
            <person name="Saunders E.H."/>
            <person name="Scott D."/>
            <person name="Shough T."/>
            <person name="Stallings R.L."/>
            <person name="Stalvey M."/>
            <person name="Sutherland R.D."/>
            <person name="Tapia R."/>
            <person name="Tesmer J.G."/>
            <person name="Thayer N."/>
            <person name="Thompson L.S."/>
            <person name="Tice H."/>
            <person name="Torney D.C."/>
            <person name="Tran-Gyamfi M."/>
            <person name="Tsai M."/>
            <person name="Ulanovsky L.E."/>
            <person name="Ustaszewska A."/>
            <person name="Vo N."/>
            <person name="White P.S."/>
            <person name="Williams A.L."/>
            <person name="Wills P.L."/>
            <person name="Wu J.-R."/>
            <person name="Wu K."/>
            <person name="Yang J."/>
            <person name="DeJong P."/>
            <person name="Bruce D."/>
            <person name="Doggett N.A."/>
            <person name="Deaven L."/>
            <person name="Schmutz J."/>
            <person name="Grimwood J."/>
            <person name="Richardson P."/>
            <person name="Rokhsar D.S."/>
            <person name="Eichler E.E."/>
            <person name="Gilna P."/>
            <person name="Lucas S.M."/>
            <person name="Myers R.M."/>
            <person name="Rubin E.M."/>
            <person name="Pennacchio L.A."/>
        </authorList>
    </citation>
    <scope>NUCLEOTIDE SEQUENCE [LARGE SCALE GENOMIC DNA]</scope>
</reference>
<reference key="5">
    <citation type="submission" date="2005-09" db="EMBL/GenBank/DDBJ databases">
        <authorList>
            <person name="Mural R.J."/>
            <person name="Istrail S."/>
            <person name="Sutton G.G."/>
            <person name="Florea L."/>
            <person name="Halpern A.L."/>
            <person name="Mobarry C.M."/>
            <person name="Lippert R."/>
            <person name="Walenz B."/>
            <person name="Shatkay H."/>
            <person name="Dew I."/>
            <person name="Miller J.R."/>
            <person name="Flanigan M.J."/>
            <person name="Edwards N.J."/>
            <person name="Bolanos R."/>
            <person name="Fasulo D."/>
            <person name="Halldorsson B.V."/>
            <person name="Hannenhalli S."/>
            <person name="Turner R."/>
            <person name="Yooseph S."/>
            <person name="Lu F."/>
            <person name="Nusskern D.R."/>
            <person name="Shue B.C."/>
            <person name="Zheng X.H."/>
            <person name="Zhong F."/>
            <person name="Delcher A.L."/>
            <person name="Huson D.H."/>
            <person name="Kravitz S.A."/>
            <person name="Mouchard L."/>
            <person name="Reinert K."/>
            <person name="Remington K.A."/>
            <person name="Clark A.G."/>
            <person name="Waterman M.S."/>
            <person name="Eichler E.E."/>
            <person name="Adams M.D."/>
            <person name="Hunkapiller M.W."/>
            <person name="Myers E.W."/>
            <person name="Venter J.C."/>
        </authorList>
    </citation>
    <scope>NUCLEOTIDE SEQUENCE [LARGE SCALE GENOMIC DNA]</scope>
</reference>
<reference key="6">
    <citation type="journal article" date="2004" name="Genome Res.">
        <title>The status, quality, and expansion of the NIH full-length cDNA project: the Mammalian Gene Collection (MGC).</title>
        <authorList>
            <consortium name="The MGC Project Team"/>
        </authorList>
    </citation>
    <scope>NUCLEOTIDE SEQUENCE [LARGE SCALE MRNA] (ISOFORMS 1 AND 2)</scope>
    <source>
        <tissue>Kidney</tissue>
        <tissue>Spleen</tissue>
    </source>
</reference>
<reference key="7">
    <citation type="journal article" date="2001" name="EMBO J.">
        <title>hRRN3 is essential in the SL1-mediated recruitment of RNA polymerase I to rRNA gene promoters.</title>
        <authorList>
            <person name="Miller G."/>
            <person name="Panov K.I."/>
            <person name="Friedrich J.K."/>
            <person name="Trinkle-Mulcahy L."/>
            <person name="Lamond A.I."/>
            <person name="Zomerdijk J.C.B.M."/>
        </authorList>
    </citation>
    <scope>FUNCTION</scope>
    <scope>SUBCELLULAR LOCATION</scope>
    <scope>INTERACTION WITH TAF1B AND TAF1C</scope>
</reference>
<reference key="8">
    <citation type="journal article" date="2002" name="EMBO Rep.">
        <title>Multiple interactions between RNA polymerase I, TIF-IA and TAF(I) subunits regulate preinitiation complex assembly at the ribosomal gene promoter.</title>
        <authorList>
            <person name="Yuan X."/>
            <person name="Zhao J."/>
            <person name="Zentgraf H."/>
            <person name="Hoffmann-Rohrer U."/>
            <person name="Grummt I."/>
        </authorList>
    </citation>
    <scope>INTERACTION WITH POLR1F; EIF3L; TAF1B AND TAF1C</scope>
    <scope>MUTAGENESIS OF 411-LEU--LYS-415</scope>
</reference>
<reference key="9">
    <citation type="journal article" date="2005" name="Genes Dev.">
        <title>The nucleolus as a stress sensor: JNK2 inactivates the transcription factor TIF-IA and down-regulates rRNA synthesis.</title>
        <authorList>
            <person name="Mayer C."/>
            <person name="Bierhoff H."/>
            <person name="Grummt I."/>
        </authorList>
    </citation>
    <scope>PHOSPHORYLATION AT THR-200 BY MAPK9/JNK2</scope>
    <scope>FUNCTION</scope>
</reference>
<reference key="10">
    <citation type="journal article" date="2008" name="Proc. Natl. Acad. Sci. U.S.A.">
        <title>A quantitative atlas of mitotic phosphorylation.</title>
        <authorList>
            <person name="Dephoure N."/>
            <person name="Zhou C."/>
            <person name="Villen J."/>
            <person name="Beausoleil S.A."/>
            <person name="Bakalarski C.E."/>
            <person name="Elledge S.J."/>
            <person name="Gygi S.P."/>
        </authorList>
    </citation>
    <scope>PHOSPHORYLATION [LARGE SCALE ANALYSIS] AT SER-170; SER-172 AND SER-640</scope>
    <scope>IDENTIFICATION BY MASS SPECTROMETRY [LARGE SCALE ANALYSIS]</scope>
    <source>
        <tissue>Cervix carcinoma</tissue>
    </source>
</reference>
<reference key="11">
    <citation type="journal article" date="2009" name="Sci. Signal.">
        <title>Quantitative phosphoproteomic analysis of T cell receptor signaling reveals system-wide modulation of protein-protein interactions.</title>
        <authorList>
            <person name="Mayya V."/>
            <person name="Lundgren D.H."/>
            <person name="Hwang S.-I."/>
            <person name="Rezaul K."/>
            <person name="Wu L."/>
            <person name="Eng J.K."/>
            <person name="Rodionov V."/>
            <person name="Han D.K."/>
        </authorList>
    </citation>
    <scope>PHOSPHORYLATION [LARGE SCALE ANALYSIS] AT SER-640</scope>
    <scope>IDENTIFICATION BY MASS SPECTROMETRY [LARGE SCALE ANALYSIS]</scope>
    <source>
        <tissue>Leukemic T-cell</tissue>
    </source>
</reference>
<reference key="12">
    <citation type="journal article" date="2010" name="Sci. Signal.">
        <title>Quantitative phosphoproteomics reveals widespread full phosphorylation site occupancy during mitosis.</title>
        <authorList>
            <person name="Olsen J.V."/>
            <person name="Vermeulen M."/>
            <person name="Santamaria A."/>
            <person name="Kumar C."/>
            <person name="Miller M.L."/>
            <person name="Jensen L.J."/>
            <person name="Gnad F."/>
            <person name="Cox J."/>
            <person name="Jensen T.S."/>
            <person name="Nigg E.A."/>
            <person name="Brunak S."/>
            <person name="Mann M."/>
        </authorList>
    </citation>
    <scope>IDENTIFICATION BY MASS SPECTROMETRY [LARGE SCALE ANALYSIS]</scope>
    <source>
        <tissue>Cervix carcinoma</tissue>
    </source>
</reference>
<reference key="13">
    <citation type="journal article" date="2011" name="Sci. Signal.">
        <title>System-wide temporal characterization of the proteome and phosphoproteome of human embryonic stem cell differentiation.</title>
        <authorList>
            <person name="Rigbolt K.T."/>
            <person name="Prokhorova T.A."/>
            <person name="Akimov V."/>
            <person name="Henningsen J."/>
            <person name="Johansen P.T."/>
            <person name="Kratchmarova I."/>
            <person name="Kassem M."/>
            <person name="Mann M."/>
            <person name="Olsen J.V."/>
            <person name="Blagoev B."/>
        </authorList>
    </citation>
    <scope>IDENTIFICATION BY MASS SPECTROMETRY [LARGE SCALE ANALYSIS]</scope>
</reference>
<reference key="14">
    <citation type="journal article" date="2013" name="J. Proteome Res.">
        <title>Toward a comprehensive characterization of a human cancer cell phosphoproteome.</title>
        <authorList>
            <person name="Zhou H."/>
            <person name="Di Palma S."/>
            <person name="Preisinger C."/>
            <person name="Peng M."/>
            <person name="Polat A.N."/>
            <person name="Heck A.J."/>
            <person name="Mohammed S."/>
        </authorList>
    </citation>
    <scope>IDENTIFICATION BY MASS SPECTROMETRY [LARGE SCALE ANALYSIS]</scope>
    <source>
        <tissue>Erythroleukemia</tissue>
    </source>
</reference>
<protein>
    <recommendedName>
        <fullName>RNA polymerase I-specific transcription initiation factor RRN3</fullName>
    </recommendedName>
    <alternativeName>
        <fullName>Transcription initiation factor IA</fullName>
        <shortName>TIF-IA</shortName>
    </alternativeName>
</protein>
<organism>
    <name type="scientific">Homo sapiens</name>
    <name type="common">Human</name>
    <dbReference type="NCBI Taxonomy" id="9606"/>
    <lineage>
        <taxon>Eukaryota</taxon>
        <taxon>Metazoa</taxon>
        <taxon>Chordata</taxon>
        <taxon>Craniata</taxon>
        <taxon>Vertebrata</taxon>
        <taxon>Euteleostomi</taxon>
        <taxon>Mammalia</taxon>
        <taxon>Eutheria</taxon>
        <taxon>Euarchontoglires</taxon>
        <taxon>Primates</taxon>
        <taxon>Haplorrhini</taxon>
        <taxon>Catarrhini</taxon>
        <taxon>Hominidae</taxon>
        <taxon>Homo</taxon>
    </lineage>
</organism>
<feature type="chain" id="PRO_0000211426" description="RNA polymerase I-specific transcription initiation factor RRN3">
    <location>
        <begin position="1"/>
        <end position="651"/>
    </location>
</feature>
<feature type="region of interest" description="Interaction with POLR1F" evidence="6">
    <location>
        <begin position="500"/>
        <end position="651"/>
    </location>
</feature>
<feature type="region of interest" description="Interaction with EIF3L" evidence="6">
    <location>
        <begin position="557"/>
        <end position="651"/>
    </location>
</feature>
<feature type="region of interest" description="Disordered" evidence="2">
    <location>
        <begin position="624"/>
        <end position="651"/>
    </location>
</feature>
<feature type="compositionally biased region" description="Low complexity" evidence="2">
    <location>
        <begin position="633"/>
        <end position="643"/>
    </location>
</feature>
<feature type="modified residue" description="Phosphoserine" evidence="11">
    <location>
        <position position="170"/>
    </location>
</feature>
<feature type="modified residue" description="Phosphoserine" evidence="11">
    <location>
        <position position="172"/>
    </location>
</feature>
<feature type="modified residue" description="Phosphothreonine; by MAPK9" evidence="7">
    <location>
        <position position="200"/>
    </location>
</feature>
<feature type="modified residue" description="Phosphoserine" evidence="11 12">
    <location>
        <position position="640"/>
    </location>
</feature>
<feature type="splice variant" id="VSP_056519" description="In isoform 4." evidence="8">
    <location>
        <begin position="1"/>
        <end position="149"/>
    </location>
</feature>
<feature type="splice variant" id="VSP_056520" description="In isoform 3." evidence="8">
    <location>
        <begin position="1"/>
        <end position="33"/>
    </location>
</feature>
<feature type="splice variant" id="VSP_056521" description="In isoform 4." evidence="8">
    <location>
        <begin position="223"/>
        <end position="255"/>
    </location>
</feature>
<feature type="splice variant" id="VSP_056338" description="In isoform 2." evidence="9">
    <original>DEDEETEHETKAGPERLDQ</original>
    <variation>VSSLLMKVEMKFIIKGGNS</variation>
    <location>
        <begin position="287"/>
        <end position="305"/>
    </location>
</feature>
<feature type="splice variant" id="VSP_056339" description="In isoform 2." evidence="9">
    <location>
        <begin position="306"/>
        <end position="651"/>
    </location>
</feature>
<feature type="sequence variant" id="VAR_051886" description="In dbSNP:rs2941256.">
    <original>I</original>
    <variation>M</variation>
    <location>
        <position position="348"/>
    </location>
</feature>
<feature type="mutagenesis site" description="Abolishes interaction with TAF1B and TAF1C." evidence="6">
    <location>
        <begin position="411"/>
        <end position="415"/>
    </location>
</feature>
<feature type="helix" evidence="13">
    <location>
        <begin position="110"/>
        <end position="113"/>
    </location>
</feature>
<feature type="helix" evidence="13">
    <location>
        <begin position="127"/>
        <end position="138"/>
    </location>
</feature>
<feature type="helix" evidence="13">
    <location>
        <begin position="141"/>
        <end position="144"/>
    </location>
</feature>
<feature type="helix" evidence="13">
    <location>
        <begin position="145"/>
        <end position="153"/>
    </location>
</feature>
<feature type="helix" evidence="13">
    <location>
        <begin position="182"/>
        <end position="196"/>
    </location>
</feature>
<feature type="helix" evidence="13">
    <location>
        <begin position="199"/>
        <end position="203"/>
    </location>
</feature>
<feature type="helix" evidence="13">
    <location>
        <begin position="205"/>
        <end position="210"/>
    </location>
</feature>
<feature type="helix" evidence="13">
    <location>
        <begin position="219"/>
        <end position="235"/>
    </location>
</feature>
<feature type="helix" evidence="13">
    <location>
        <begin position="240"/>
        <end position="256"/>
    </location>
</feature>
<feature type="helix" evidence="13">
    <location>
        <begin position="309"/>
        <end position="328"/>
    </location>
</feature>
<feature type="helix" evidence="13">
    <location>
        <begin position="342"/>
        <end position="354"/>
    </location>
</feature>
<feature type="turn" evidence="13">
    <location>
        <begin position="355"/>
        <end position="357"/>
    </location>
</feature>
<feature type="helix" evidence="13">
    <location>
        <begin position="365"/>
        <end position="371"/>
    </location>
</feature>
<feature type="helix" evidence="13">
    <location>
        <begin position="376"/>
        <end position="391"/>
    </location>
</feature>
<feature type="helix" evidence="13">
    <location>
        <begin position="397"/>
        <end position="412"/>
    </location>
</feature>
<feature type="strand" evidence="13">
    <location>
        <begin position="415"/>
        <end position="417"/>
    </location>
</feature>
<feature type="helix" evidence="13">
    <location>
        <begin position="419"/>
        <end position="439"/>
    </location>
</feature>
<feature type="helix" evidence="13">
    <location>
        <begin position="454"/>
        <end position="469"/>
    </location>
</feature>
<feature type="turn" evidence="13">
    <location>
        <begin position="470"/>
        <end position="474"/>
    </location>
</feature>
<feature type="helix" evidence="13">
    <location>
        <begin position="484"/>
        <end position="486"/>
    </location>
</feature>
<feature type="helix" evidence="13">
    <location>
        <begin position="487"/>
        <end position="495"/>
    </location>
</feature>
<feature type="strand" evidence="13">
    <location>
        <begin position="497"/>
        <end position="499"/>
    </location>
</feature>
<feature type="turn" evidence="13">
    <location>
        <begin position="501"/>
        <end position="504"/>
    </location>
</feature>
<feature type="helix" evidence="13">
    <location>
        <begin position="507"/>
        <end position="519"/>
    </location>
</feature>
<feature type="helix" evidence="13">
    <location>
        <begin position="554"/>
        <end position="558"/>
    </location>
</feature>
<feature type="turn" evidence="13">
    <location>
        <begin position="567"/>
        <end position="569"/>
    </location>
</feature>
<feature type="helix" evidence="13">
    <location>
        <begin position="571"/>
        <end position="574"/>
    </location>
</feature>
<accession>Q9NYV6</accession>
<accession>A2RTY9</accession>
<accession>B4E0J7</accession>
<accession>B4E3T2</accession>
<accession>Q3MHU9</accession>
<accession>Q6IPL4</accession>
<accession>Q9H4F0</accession>
<keyword id="KW-0002">3D-structure</keyword>
<keyword id="KW-0025">Alternative splicing</keyword>
<keyword id="KW-0539">Nucleus</keyword>
<keyword id="KW-0597">Phosphoprotein</keyword>
<keyword id="KW-1267">Proteomics identification</keyword>
<keyword id="KW-1185">Reference proteome</keyword>
<keyword id="KW-0804">Transcription</keyword>
<keyword id="KW-0805">Transcription regulation</keyword>
<dbReference type="EMBL" id="AJ272050">
    <property type="protein sequence ID" value="CAC07955.1"/>
    <property type="molecule type" value="mRNA"/>
</dbReference>
<dbReference type="EMBL" id="AF227156">
    <property type="protein sequence ID" value="AAF66160.1"/>
    <property type="molecule type" value="mRNA"/>
</dbReference>
<dbReference type="EMBL" id="AK303405">
    <property type="protein sequence ID" value="BAG64459.1"/>
    <property type="molecule type" value="mRNA"/>
</dbReference>
<dbReference type="EMBL" id="AK304856">
    <property type="protein sequence ID" value="BAG65594.1"/>
    <property type="molecule type" value="mRNA"/>
</dbReference>
<dbReference type="EMBL" id="AK314769">
    <property type="protein sequence ID" value="BAG37307.1"/>
    <property type="molecule type" value="mRNA"/>
</dbReference>
<dbReference type="EMBL" id="AC139256">
    <property type="status" value="NOT_ANNOTATED_CDS"/>
    <property type="molecule type" value="Genomic_DNA"/>
</dbReference>
<dbReference type="EMBL" id="CH471301">
    <property type="protein sequence ID" value="EAW54754.1"/>
    <property type="molecule type" value="Genomic_DNA"/>
</dbReference>
<dbReference type="EMBL" id="BC071868">
    <property type="protein sequence ID" value="AAH71868.1"/>
    <property type="molecule type" value="mRNA"/>
</dbReference>
<dbReference type="EMBL" id="BC104660">
    <property type="protein sequence ID" value="AAI04661.1"/>
    <property type="molecule type" value="mRNA"/>
</dbReference>
<dbReference type="EMBL" id="BC132688">
    <property type="protein sequence ID" value="AAI32689.1"/>
    <property type="molecule type" value="mRNA"/>
</dbReference>
<dbReference type="EMBL" id="BC132690">
    <property type="protein sequence ID" value="AAI32691.1"/>
    <property type="molecule type" value="mRNA"/>
</dbReference>
<dbReference type="CCDS" id="CCDS10559.1">
    <molecule id="Q9NYV6-1"/>
</dbReference>
<dbReference type="RefSeq" id="NP_060897.3">
    <molecule id="Q9NYV6-1"/>
    <property type="nucleotide sequence ID" value="NM_018427.4"/>
</dbReference>
<dbReference type="PDB" id="7OBA">
    <property type="method" value="EM"/>
    <property type="resolution" value="3.10 A"/>
    <property type="chains" value="O=1-651"/>
</dbReference>
<dbReference type="PDBsum" id="7OBA"/>
<dbReference type="EMDB" id="EMD-12796"/>
<dbReference type="SMR" id="Q9NYV6"/>
<dbReference type="BioGRID" id="120102">
    <property type="interactions" value="45"/>
</dbReference>
<dbReference type="CORUM" id="Q9NYV6"/>
<dbReference type="FunCoup" id="Q9NYV6">
    <property type="interactions" value="3102"/>
</dbReference>
<dbReference type="IntAct" id="Q9NYV6">
    <property type="interactions" value="17"/>
</dbReference>
<dbReference type="MINT" id="Q9NYV6"/>
<dbReference type="STRING" id="9606.ENSP00000198767"/>
<dbReference type="iPTMnet" id="Q9NYV6"/>
<dbReference type="MetOSite" id="Q9NYV6"/>
<dbReference type="PhosphoSitePlus" id="Q9NYV6"/>
<dbReference type="BioMuta" id="RRN3"/>
<dbReference type="DMDM" id="74719591"/>
<dbReference type="jPOST" id="Q9NYV6"/>
<dbReference type="MassIVE" id="Q9NYV6"/>
<dbReference type="PaxDb" id="9606-ENSP00000198767"/>
<dbReference type="PeptideAtlas" id="Q9NYV6"/>
<dbReference type="ProteomicsDB" id="5679"/>
<dbReference type="ProteomicsDB" id="5920"/>
<dbReference type="ProteomicsDB" id="61783"/>
<dbReference type="ProteomicsDB" id="83282">
    <molecule id="Q9NYV6-1"/>
</dbReference>
<dbReference type="Pumba" id="Q9NYV6"/>
<dbReference type="Antibodypedia" id="11691">
    <property type="antibodies" value="228 antibodies from 31 providers"/>
</dbReference>
<dbReference type="DNASU" id="54700"/>
<dbReference type="Ensembl" id="ENST00000198767.11">
    <molecule id="Q9NYV6-1"/>
    <property type="protein sequence ID" value="ENSP00000198767.7"/>
    <property type="gene ID" value="ENSG00000085721.13"/>
</dbReference>
<dbReference type="Ensembl" id="ENST00000327307.11">
    <molecule id="Q9NYV6-3"/>
    <property type="protein sequence ID" value="ENSP00000318484.7"/>
    <property type="gene ID" value="ENSG00000085721.13"/>
</dbReference>
<dbReference type="Ensembl" id="ENST00000564131.1">
    <molecule id="Q9NYV6-2"/>
    <property type="protein sequence ID" value="ENSP00000454238.1"/>
    <property type="gene ID" value="ENSG00000085721.13"/>
</dbReference>
<dbReference type="Ensembl" id="ENST00000616334.2">
    <molecule id="Q9NYV6-1"/>
    <property type="protein sequence ID" value="ENSP00000480743.1"/>
    <property type="gene ID" value="ENSG00000278494.2"/>
</dbReference>
<dbReference type="Ensembl" id="ENST00000632541.1">
    <molecule id="Q9NYV6-3"/>
    <property type="protein sequence ID" value="ENSP00000488651.1"/>
    <property type="gene ID" value="ENSG00000278494.2"/>
</dbReference>
<dbReference type="Ensembl" id="ENST00000634151.1">
    <molecule id="Q9NYV6-2"/>
    <property type="protein sequence ID" value="ENSP00000487821.1"/>
    <property type="gene ID" value="ENSG00000278494.2"/>
</dbReference>
<dbReference type="GeneID" id="54700"/>
<dbReference type="KEGG" id="hsa:54700"/>
<dbReference type="MANE-Select" id="ENST00000198767.11">
    <property type="protein sequence ID" value="ENSP00000198767.7"/>
    <property type="RefSeq nucleotide sequence ID" value="NM_018427.5"/>
    <property type="RefSeq protein sequence ID" value="NP_060897.3"/>
</dbReference>
<dbReference type="UCSC" id="uc002dde.4">
    <molecule id="Q9NYV6-1"/>
    <property type="organism name" value="human"/>
</dbReference>
<dbReference type="AGR" id="HGNC:30346"/>
<dbReference type="CTD" id="54700"/>
<dbReference type="DisGeNET" id="54700"/>
<dbReference type="GeneCards" id="RRN3"/>
<dbReference type="HGNC" id="HGNC:30346">
    <property type="gene designation" value="RRN3"/>
</dbReference>
<dbReference type="HPA" id="ENSG00000085721">
    <property type="expression patterns" value="Low tissue specificity"/>
</dbReference>
<dbReference type="MIM" id="605121">
    <property type="type" value="gene"/>
</dbReference>
<dbReference type="neXtProt" id="NX_Q9NYV6"/>
<dbReference type="OpenTargets" id="ENSG00000085721"/>
<dbReference type="PharmGKB" id="PA134878601"/>
<dbReference type="VEuPathDB" id="HostDB:ENSG00000085721"/>
<dbReference type="eggNOG" id="KOG2434">
    <property type="taxonomic scope" value="Eukaryota"/>
</dbReference>
<dbReference type="GeneTree" id="ENSGT00390000001488"/>
<dbReference type="HOGENOM" id="CLU_010579_3_1_1"/>
<dbReference type="InParanoid" id="Q9NYV6"/>
<dbReference type="OMA" id="VCSPAIV"/>
<dbReference type="OrthoDB" id="26970at2759"/>
<dbReference type="PAN-GO" id="Q9NYV6">
    <property type="GO annotations" value="4 GO annotations based on evolutionary models"/>
</dbReference>
<dbReference type="PhylomeDB" id="Q9NYV6"/>
<dbReference type="TreeFam" id="TF312979"/>
<dbReference type="PathwayCommons" id="Q9NYV6"/>
<dbReference type="Reactome" id="R-HSA-73762">
    <property type="pathway name" value="RNA Polymerase I Transcription Initiation"/>
</dbReference>
<dbReference type="Reactome" id="R-HSA-73772">
    <property type="pathway name" value="RNA Polymerase I Promoter Escape"/>
</dbReference>
<dbReference type="SignaLink" id="Q9NYV6"/>
<dbReference type="SIGNOR" id="Q9NYV6"/>
<dbReference type="BioGRID-ORCS" id="54700">
    <property type="hits" value="757 hits in 1158 CRISPR screens"/>
</dbReference>
<dbReference type="CD-CODE" id="91857CE7">
    <property type="entry name" value="Nucleolus"/>
</dbReference>
<dbReference type="ChiTaRS" id="RRN3">
    <property type="organism name" value="human"/>
</dbReference>
<dbReference type="GeneWiki" id="RRN3"/>
<dbReference type="GenomeRNAi" id="54700"/>
<dbReference type="Pharos" id="Q9NYV6">
    <property type="development level" value="Tbio"/>
</dbReference>
<dbReference type="PRO" id="PR:Q9NYV6"/>
<dbReference type="Proteomes" id="UP000005640">
    <property type="component" value="Chromosome 16"/>
</dbReference>
<dbReference type="RNAct" id="Q9NYV6">
    <property type="molecule type" value="protein"/>
</dbReference>
<dbReference type="Bgee" id="ENSG00000085721">
    <property type="expression patterns" value="Expressed in cortical plate and 102 other cell types or tissues"/>
</dbReference>
<dbReference type="ExpressionAtlas" id="Q9NYV6">
    <property type="expression patterns" value="baseline and differential"/>
</dbReference>
<dbReference type="GO" id="GO:0005730">
    <property type="term" value="C:nucleolus"/>
    <property type="evidence" value="ECO:0000314"/>
    <property type="project" value="HPA"/>
</dbReference>
<dbReference type="GO" id="GO:0005654">
    <property type="term" value="C:nucleoplasm"/>
    <property type="evidence" value="ECO:0000304"/>
    <property type="project" value="Reactome"/>
</dbReference>
<dbReference type="GO" id="GO:0005634">
    <property type="term" value="C:nucleus"/>
    <property type="evidence" value="ECO:0000318"/>
    <property type="project" value="GO_Central"/>
</dbReference>
<dbReference type="GO" id="GO:0001042">
    <property type="term" value="F:RNA polymerase I core binding"/>
    <property type="evidence" value="ECO:0000318"/>
    <property type="project" value="GO_Central"/>
</dbReference>
<dbReference type="GO" id="GO:0001164">
    <property type="term" value="F:RNA polymerase I core promoter sequence-specific DNA binding"/>
    <property type="evidence" value="ECO:0000314"/>
    <property type="project" value="UniProtKB"/>
</dbReference>
<dbReference type="GO" id="GO:0001181">
    <property type="term" value="F:RNA polymerase I general transcription initiation factor activity"/>
    <property type="evidence" value="ECO:0000314"/>
    <property type="project" value="UniProtKB"/>
</dbReference>
<dbReference type="GO" id="GO:0007028">
    <property type="term" value="P:cytoplasm organization"/>
    <property type="evidence" value="ECO:0007669"/>
    <property type="project" value="Ensembl"/>
</dbReference>
<dbReference type="GO" id="GO:0048144">
    <property type="term" value="P:fibroblast proliferation"/>
    <property type="evidence" value="ECO:0007669"/>
    <property type="project" value="Ensembl"/>
</dbReference>
<dbReference type="GO" id="GO:0048872">
    <property type="term" value="P:homeostasis of number of cells"/>
    <property type="evidence" value="ECO:0007669"/>
    <property type="project" value="Ensembl"/>
</dbReference>
<dbReference type="GO" id="GO:0001701">
    <property type="term" value="P:in utero embryonic development"/>
    <property type="evidence" value="ECO:0007669"/>
    <property type="project" value="Ensembl"/>
</dbReference>
<dbReference type="GO" id="GO:0072332">
    <property type="term" value="P:intrinsic apoptotic signaling pathway by p53 class mediator"/>
    <property type="evidence" value="ECO:0007669"/>
    <property type="project" value="Ensembl"/>
</dbReference>
<dbReference type="GO" id="GO:1902254">
    <property type="term" value="P:negative regulation of intrinsic apoptotic signaling pathway by p53 class mediator"/>
    <property type="evidence" value="ECO:0007669"/>
    <property type="project" value="Ensembl"/>
</dbReference>
<dbReference type="GO" id="GO:0007000">
    <property type="term" value="P:nucleolus organization"/>
    <property type="evidence" value="ECO:0007669"/>
    <property type="project" value="Ensembl"/>
</dbReference>
<dbReference type="GO" id="GO:0045893">
    <property type="term" value="P:positive regulation of DNA-templated transcription"/>
    <property type="evidence" value="ECO:0007669"/>
    <property type="project" value="Ensembl"/>
</dbReference>
<dbReference type="GO" id="GO:2000142">
    <property type="term" value="P:regulation of DNA-templated transcription initiation"/>
    <property type="evidence" value="ECO:0007669"/>
    <property type="project" value="Ensembl"/>
</dbReference>
<dbReference type="GO" id="GO:0042254">
    <property type="term" value="P:ribosome biogenesis"/>
    <property type="evidence" value="ECO:0007669"/>
    <property type="project" value="Ensembl"/>
</dbReference>
<dbReference type="GO" id="GO:0006361">
    <property type="term" value="P:transcription initiation at RNA polymerase I promoter"/>
    <property type="evidence" value="ECO:0000314"/>
    <property type="project" value="UniProtKB"/>
</dbReference>
<dbReference type="InterPro" id="IPR007991">
    <property type="entry name" value="RNA_pol_I_trans_ini_fac_RRN3"/>
</dbReference>
<dbReference type="PANTHER" id="PTHR12790:SF0">
    <property type="entry name" value="RNA POLYMERASE I-SPECIFIC TRANSCRIPTION INITIATION FACTOR RRN3-RELATED"/>
    <property type="match status" value="1"/>
</dbReference>
<dbReference type="PANTHER" id="PTHR12790">
    <property type="entry name" value="TRANSCRIPTION INITIATION FACTOR IA RRN3"/>
    <property type="match status" value="1"/>
</dbReference>
<dbReference type="Pfam" id="PF05327">
    <property type="entry name" value="RRN3"/>
    <property type="match status" value="1"/>
</dbReference>
<evidence type="ECO:0000250" key="1"/>
<evidence type="ECO:0000256" key="2">
    <source>
        <dbReference type="SAM" id="MobiDB-lite"/>
    </source>
</evidence>
<evidence type="ECO:0000269" key="3">
    <source>
    </source>
</evidence>
<evidence type="ECO:0000269" key="4">
    <source>
    </source>
</evidence>
<evidence type="ECO:0000269" key="5">
    <source>
    </source>
</evidence>
<evidence type="ECO:0000269" key="6">
    <source>
    </source>
</evidence>
<evidence type="ECO:0000269" key="7">
    <source>
    </source>
</evidence>
<evidence type="ECO:0000303" key="8">
    <source>
    </source>
</evidence>
<evidence type="ECO:0000303" key="9">
    <source>
    </source>
</evidence>
<evidence type="ECO:0000305" key="10"/>
<evidence type="ECO:0007744" key="11">
    <source>
    </source>
</evidence>
<evidence type="ECO:0007744" key="12">
    <source>
    </source>
</evidence>
<evidence type="ECO:0007829" key="13">
    <source>
        <dbReference type="PDB" id="7OBA"/>
    </source>
</evidence>
<name>RRN3_HUMAN</name>
<proteinExistence type="evidence at protein level"/>
<gene>
    <name type="primary">RRN3</name>
    <name type="synonym">TIFIA</name>
</gene>
<sequence length="651" mass="74107">MAAPLLHTRLPGDAAASSSAVKKLGASRTGISNMRALENDFFNSPPRKTVRFGGTVTEVLLKYKKGETNDFELLKNQLLDPDIKDDQIINWLLEFRSSIMYLTKDFEQLISIILRLPWLNRSQTVVEEYLAFLGNLVSAQTVFLRPCLSMIASHFVPPRVIIKEGDVDVSDSDDEDDNLPANFDTCHRALQIIARYVPSTPWFLMPILVEKFPFVRKSERTLECYVHNLLRISVYFPTLRHEILELIIEKLLKLDVNASRQGIEDAEETATQTCGGTDSTEGLFNMDEDEETEHETKAGPERLDQMVHPVAERLDILMSLVLSYMKDVCYVDGKVDNGKTKDLYRDLINIFDKLLLPTHASCHVQFFMFYLCSFKLGFAEAFLEHLWKKLQDPSNPAIIRQAAGNYIGSFLARAKFIPLITVKSCLDLLVNWLHIYLNNQDSGTKAFCDVALHGPFYSACQAVFYTFVFRHKQLLSGNLKEGLQYLQSLNFERIVMSQLNPLKICLPSVVNFFAAITNKYQLVFCYTIIERNNRQMLPVIRSTAGGDSVQICTNPLDTFFPFDPCVLKRSKKFIDPIYQVWEDMSAEELQEFKKPMKKDIVEDEDDDFLKGEVPQNDTVIGITPSSFDTHFRSPSSSVGSPPVLYMQPSPL</sequence>